<keyword id="KW-0687">Ribonucleoprotein</keyword>
<keyword id="KW-0689">Ribosomal protein</keyword>
<keyword id="KW-0694">RNA-binding</keyword>
<keyword id="KW-0699">rRNA-binding</keyword>
<organism>
    <name type="scientific">Methylobacterium sp. (strain 4-46)</name>
    <dbReference type="NCBI Taxonomy" id="426117"/>
    <lineage>
        <taxon>Bacteria</taxon>
        <taxon>Pseudomonadati</taxon>
        <taxon>Pseudomonadota</taxon>
        <taxon>Alphaproteobacteria</taxon>
        <taxon>Hyphomicrobiales</taxon>
        <taxon>Methylobacteriaceae</taxon>
        <taxon>Methylobacterium</taxon>
    </lineage>
</organism>
<dbReference type="EMBL" id="CP000943">
    <property type="protein sequence ID" value="ACA14920.1"/>
    <property type="molecule type" value="Genomic_DNA"/>
</dbReference>
<dbReference type="RefSeq" id="WP_012330338.1">
    <property type="nucleotide sequence ID" value="NC_010511.1"/>
</dbReference>
<dbReference type="SMR" id="B0UHW5"/>
<dbReference type="STRING" id="426117.M446_0349"/>
<dbReference type="KEGG" id="met:M446_0349"/>
<dbReference type="eggNOG" id="COG0185">
    <property type="taxonomic scope" value="Bacteria"/>
</dbReference>
<dbReference type="HOGENOM" id="CLU_144911_0_1_5"/>
<dbReference type="GO" id="GO:0005737">
    <property type="term" value="C:cytoplasm"/>
    <property type="evidence" value="ECO:0007669"/>
    <property type="project" value="UniProtKB-ARBA"/>
</dbReference>
<dbReference type="GO" id="GO:0015935">
    <property type="term" value="C:small ribosomal subunit"/>
    <property type="evidence" value="ECO:0007669"/>
    <property type="project" value="InterPro"/>
</dbReference>
<dbReference type="GO" id="GO:0019843">
    <property type="term" value="F:rRNA binding"/>
    <property type="evidence" value="ECO:0007669"/>
    <property type="project" value="UniProtKB-UniRule"/>
</dbReference>
<dbReference type="GO" id="GO:0003735">
    <property type="term" value="F:structural constituent of ribosome"/>
    <property type="evidence" value="ECO:0007669"/>
    <property type="project" value="InterPro"/>
</dbReference>
<dbReference type="GO" id="GO:0000028">
    <property type="term" value="P:ribosomal small subunit assembly"/>
    <property type="evidence" value="ECO:0007669"/>
    <property type="project" value="TreeGrafter"/>
</dbReference>
<dbReference type="GO" id="GO:0006412">
    <property type="term" value="P:translation"/>
    <property type="evidence" value="ECO:0007669"/>
    <property type="project" value="UniProtKB-UniRule"/>
</dbReference>
<dbReference type="FunFam" id="3.30.860.10:FF:000001">
    <property type="entry name" value="30S ribosomal protein S19"/>
    <property type="match status" value="1"/>
</dbReference>
<dbReference type="Gene3D" id="3.30.860.10">
    <property type="entry name" value="30s Ribosomal Protein S19, Chain A"/>
    <property type="match status" value="1"/>
</dbReference>
<dbReference type="HAMAP" id="MF_00531">
    <property type="entry name" value="Ribosomal_uS19"/>
    <property type="match status" value="1"/>
</dbReference>
<dbReference type="InterPro" id="IPR002222">
    <property type="entry name" value="Ribosomal_uS19"/>
</dbReference>
<dbReference type="InterPro" id="IPR005732">
    <property type="entry name" value="Ribosomal_uS19_bac-type"/>
</dbReference>
<dbReference type="InterPro" id="IPR020934">
    <property type="entry name" value="Ribosomal_uS19_CS"/>
</dbReference>
<dbReference type="InterPro" id="IPR023575">
    <property type="entry name" value="Ribosomal_uS19_SF"/>
</dbReference>
<dbReference type="NCBIfam" id="TIGR01050">
    <property type="entry name" value="rpsS_bact"/>
    <property type="match status" value="1"/>
</dbReference>
<dbReference type="PANTHER" id="PTHR11880">
    <property type="entry name" value="RIBOSOMAL PROTEIN S19P FAMILY MEMBER"/>
    <property type="match status" value="1"/>
</dbReference>
<dbReference type="PANTHER" id="PTHR11880:SF8">
    <property type="entry name" value="SMALL RIBOSOMAL SUBUNIT PROTEIN US19M"/>
    <property type="match status" value="1"/>
</dbReference>
<dbReference type="Pfam" id="PF00203">
    <property type="entry name" value="Ribosomal_S19"/>
    <property type="match status" value="1"/>
</dbReference>
<dbReference type="PIRSF" id="PIRSF002144">
    <property type="entry name" value="Ribosomal_S19"/>
    <property type="match status" value="1"/>
</dbReference>
<dbReference type="PRINTS" id="PR00975">
    <property type="entry name" value="RIBOSOMALS19"/>
</dbReference>
<dbReference type="SUPFAM" id="SSF54570">
    <property type="entry name" value="Ribosomal protein S19"/>
    <property type="match status" value="1"/>
</dbReference>
<dbReference type="PROSITE" id="PS00323">
    <property type="entry name" value="RIBOSOMAL_S19"/>
    <property type="match status" value="1"/>
</dbReference>
<sequence length="92" mass="10464">MARSVWKGPFVDGYLLKKAETARGSTRAEVIKIWSRRSTILPQFVGLTFGVYNGQKHIPVYVTEEMVGHKFGEFSPTRTFHGHAADKKAKRR</sequence>
<accession>B0UHW5</accession>
<comment type="function">
    <text evidence="1">Protein S19 forms a complex with S13 that binds strongly to the 16S ribosomal RNA.</text>
</comment>
<comment type="similarity">
    <text evidence="1">Belongs to the universal ribosomal protein uS19 family.</text>
</comment>
<feature type="chain" id="PRO_1000128004" description="Small ribosomal subunit protein uS19">
    <location>
        <begin position="1"/>
        <end position="92"/>
    </location>
</feature>
<gene>
    <name evidence="1" type="primary">rpsS</name>
    <name type="ordered locus">M446_0349</name>
</gene>
<protein>
    <recommendedName>
        <fullName evidence="1">Small ribosomal subunit protein uS19</fullName>
    </recommendedName>
    <alternativeName>
        <fullName evidence="2">30S ribosomal protein S19</fullName>
    </alternativeName>
</protein>
<evidence type="ECO:0000255" key="1">
    <source>
        <dbReference type="HAMAP-Rule" id="MF_00531"/>
    </source>
</evidence>
<evidence type="ECO:0000305" key="2"/>
<proteinExistence type="inferred from homology"/>
<reference key="1">
    <citation type="submission" date="2008-02" db="EMBL/GenBank/DDBJ databases">
        <title>Complete sequence of chromosome of Methylobacterium sp. 4-46.</title>
        <authorList>
            <consortium name="US DOE Joint Genome Institute"/>
            <person name="Copeland A."/>
            <person name="Lucas S."/>
            <person name="Lapidus A."/>
            <person name="Glavina del Rio T."/>
            <person name="Dalin E."/>
            <person name="Tice H."/>
            <person name="Bruce D."/>
            <person name="Goodwin L."/>
            <person name="Pitluck S."/>
            <person name="Chertkov O."/>
            <person name="Brettin T."/>
            <person name="Detter J.C."/>
            <person name="Han C."/>
            <person name="Kuske C.R."/>
            <person name="Schmutz J."/>
            <person name="Larimer F."/>
            <person name="Land M."/>
            <person name="Hauser L."/>
            <person name="Kyrpides N."/>
            <person name="Ivanova N."/>
            <person name="Marx C.J."/>
            <person name="Richardson P."/>
        </authorList>
    </citation>
    <scope>NUCLEOTIDE SEQUENCE [LARGE SCALE GENOMIC DNA]</scope>
    <source>
        <strain>4-46</strain>
    </source>
</reference>
<name>RS19_METS4</name>